<evidence type="ECO:0000255" key="1">
    <source>
        <dbReference type="HAMAP-Rule" id="MF_01707"/>
    </source>
</evidence>
<accession>Q57FS7</accession>
<reference key="1">
    <citation type="journal article" date="2005" name="J. Bacteriol.">
        <title>Completion of the genome sequence of Brucella abortus and comparison to the highly similar genomes of Brucella melitensis and Brucella suis.</title>
        <authorList>
            <person name="Halling S.M."/>
            <person name="Peterson-Burch B.D."/>
            <person name="Bricker B.J."/>
            <person name="Zuerner R.L."/>
            <person name="Qing Z."/>
            <person name="Li L.-L."/>
            <person name="Kapur V."/>
            <person name="Alt D.P."/>
            <person name="Olsen S.C."/>
        </authorList>
    </citation>
    <scope>NUCLEOTIDE SEQUENCE [LARGE SCALE GENOMIC DNA]</scope>
    <source>
        <strain>9-941</strain>
    </source>
</reference>
<keyword id="KW-0067">ATP-binding</keyword>
<keyword id="KW-0997">Cell inner membrane</keyword>
<keyword id="KW-1003">Cell membrane</keyword>
<keyword id="KW-0201">Cytochrome c-type biogenesis</keyword>
<keyword id="KW-0472">Membrane</keyword>
<keyword id="KW-0547">Nucleotide-binding</keyword>
<keyword id="KW-1278">Translocase</keyword>
<keyword id="KW-0813">Transport</keyword>
<name>CCMA_BRUAB</name>
<feature type="chain" id="PRO_0000260188" description="Cytochrome c biogenesis ATP-binding export protein CcmA">
    <location>
        <begin position="1"/>
        <end position="215"/>
    </location>
</feature>
<feature type="domain" description="ABC transporter" evidence="1">
    <location>
        <begin position="3"/>
        <end position="215"/>
    </location>
</feature>
<feature type="binding site" evidence="1">
    <location>
        <begin position="35"/>
        <end position="42"/>
    </location>
    <ligand>
        <name>ATP</name>
        <dbReference type="ChEBI" id="CHEBI:30616"/>
    </ligand>
</feature>
<dbReference type="EC" id="7.6.2.5" evidence="1"/>
<dbReference type="EMBL" id="AE017223">
    <property type="protein sequence ID" value="AAX73507.1"/>
    <property type="molecule type" value="Genomic_DNA"/>
</dbReference>
<dbReference type="RefSeq" id="WP_002965342.1">
    <property type="nucleotide sequence ID" value="NC_006932.1"/>
</dbReference>
<dbReference type="SMR" id="Q57FS7"/>
<dbReference type="EnsemblBacteria" id="AAX73507">
    <property type="protein sequence ID" value="AAX73507"/>
    <property type="gene ID" value="BruAb1_0091"/>
</dbReference>
<dbReference type="GeneID" id="97534484"/>
<dbReference type="KEGG" id="bmb:BruAb1_0091"/>
<dbReference type="HOGENOM" id="CLU_000604_1_2_5"/>
<dbReference type="Proteomes" id="UP000000540">
    <property type="component" value="Chromosome I"/>
</dbReference>
<dbReference type="GO" id="GO:0005886">
    <property type="term" value="C:plasma membrane"/>
    <property type="evidence" value="ECO:0007669"/>
    <property type="project" value="UniProtKB-SubCell"/>
</dbReference>
<dbReference type="GO" id="GO:0015439">
    <property type="term" value="F:ABC-type heme transporter activity"/>
    <property type="evidence" value="ECO:0007669"/>
    <property type="project" value="UniProtKB-EC"/>
</dbReference>
<dbReference type="GO" id="GO:0005524">
    <property type="term" value="F:ATP binding"/>
    <property type="evidence" value="ECO:0007669"/>
    <property type="project" value="UniProtKB-KW"/>
</dbReference>
<dbReference type="GO" id="GO:0016887">
    <property type="term" value="F:ATP hydrolysis activity"/>
    <property type="evidence" value="ECO:0007669"/>
    <property type="project" value="InterPro"/>
</dbReference>
<dbReference type="GO" id="GO:0017004">
    <property type="term" value="P:cytochrome complex assembly"/>
    <property type="evidence" value="ECO:0007669"/>
    <property type="project" value="UniProtKB-KW"/>
</dbReference>
<dbReference type="CDD" id="cd03231">
    <property type="entry name" value="ABC_CcmA_heme_exporter"/>
    <property type="match status" value="1"/>
</dbReference>
<dbReference type="Gene3D" id="3.40.50.300">
    <property type="entry name" value="P-loop containing nucleotide triphosphate hydrolases"/>
    <property type="match status" value="1"/>
</dbReference>
<dbReference type="InterPro" id="IPR003593">
    <property type="entry name" value="AAA+_ATPase"/>
</dbReference>
<dbReference type="InterPro" id="IPR003439">
    <property type="entry name" value="ABC_transporter-like_ATP-bd"/>
</dbReference>
<dbReference type="InterPro" id="IPR005895">
    <property type="entry name" value="ABC_transptr_haem_export_CcmA"/>
</dbReference>
<dbReference type="InterPro" id="IPR027417">
    <property type="entry name" value="P-loop_NTPase"/>
</dbReference>
<dbReference type="NCBIfam" id="TIGR01189">
    <property type="entry name" value="ccmA"/>
    <property type="match status" value="1"/>
</dbReference>
<dbReference type="PANTHER" id="PTHR43499">
    <property type="entry name" value="ABC TRANSPORTER I FAMILY MEMBER 1"/>
    <property type="match status" value="1"/>
</dbReference>
<dbReference type="PANTHER" id="PTHR43499:SF1">
    <property type="entry name" value="ABC TRANSPORTER I FAMILY MEMBER 1"/>
    <property type="match status" value="1"/>
</dbReference>
<dbReference type="Pfam" id="PF00005">
    <property type="entry name" value="ABC_tran"/>
    <property type="match status" value="1"/>
</dbReference>
<dbReference type="SMART" id="SM00382">
    <property type="entry name" value="AAA"/>
    <property type="match status" value="1"/>
</dbReference>
<dbReference type="SUPFAM" id="SSF52540">
    <property type="entry name" value="P-loop containing nucleoside triphosphate hydrolases"/>
    <property type="match status" value="1"/>
</dbReference>
<dbReference type="PROSITE" id="PS50893">
    <property type="entry name" value="ABC_TRANSPORTER_2"/>
    <property type="match status" value="1"/>
</dbReference>
<dbReference type="PROSITE" id="PS51243">
    <property type="entry name" value="CCMA"/>
    <property type="match status" value="1"/>
</dbReference>
<sequence>MRLEAENLAGERGGETIFSHLSFTIGTGQALVVTGPNGSGKSTLLRIICGLLAPEAGEVKLTEGTQIVPVRAACHYLGHQNAMKPALSVRENLLFWQKFNGGEALDIGAALEAVDLAGVEHLPFGYLSTGQKRRVSIAKLLVSHRPLWIVDEPTAGLDKASEARFAELMREHMRQDGMIIAATHIPLGLDGAISTTGNALVRSLDMAAFSVEDIA</sequence>
<protein>
    <recommendedName>
        <fullName evidence="1">Cytochrome c biogenesis ATP-binding export protein CcmA</fullName>
        <ecNumber evidence="1">7.6.2.5</ecNumber>
    </recommendedName>
    <alternativeName>
        <fullName evidence="1">Heme exporter protein A</fullName>
    </alternativeName>
</protein>
<gene>
    <name evidence="1" type="primary">ccmA</name>
    <name type="ordered locus">BruAb1_0091</name>
</gene>
<proteinExistence type="inferred from homology"/>
<comment type="function">
    <text evidence="1">Part of the ABC transporter complex CcmAB involved in the biogenesis of c-type cytochromes; once thought to export heme, this seems not to be the case, but its exact role is uncertain. Responsible for energy coupling to the transport system.</text>
</comment>
<comment type="catalytic activity">
    <reaction evidence="1">
        <text>heme b(in) + ATP + H2O = heme b(out) + ADP + phosphate + H(+)</text>
        <dbReference type="Rhea" id="RHEA:19261"/>
        <dbReference type="ChEBI" id="CHEBI:15377"/>
        <dbReference type="ChEBI" id="CHEBI:15378"/>
        <dbReference type="ChEBI" id="CHEBI:30616"/>
        <dbReference type="ChEBI" id="CHEBI:43474"/>
        <dbReference type="ChEBI" id="CHEBI:60344"/>
        <dbReference type="ChEBI" id="CHEBI:456216"/>
        <dbReference type="EC" id="7.6.2.5"/>
    </reaction>
</comment>
<comment type="subunit">
    <text evidence="1">The complex is composed of two ATP-binding proteins (CcmA) and two transmembrane proteins (CcmB).</text>
</comment>
<comment type="subcellular location">
    <subcellularLocation>
        <location evidence="1">Cell inner membrane</location>
        <topology evidence="1">Peripheral membrane protein</topology>
    </subcellularLocation>
</comment>
<comment type="similarity">
    <text evidence="1">Belongs to the ABC transporter superfamily. CcmA exporter (TC 3.A.1.107) family.</text>
</comment>
<organism>
    <name type="scientific">Brucella abortus biovar 1 (strain 9-941)</name>
    <dbReference type="NCBI Taxonomy" id="262698"/>
    <lineage>
        <taxon>Bacteria</taxon>
        <taxon>Pseudomonadati</taxon>
        <taxon>Pseudomonadota</taxon>
        <taxon>Alphaproteobacteria</taxon>
        <taxon>Hyphomicrobiales</taxon>
        <taxon>Brucellaceae</taxon>
        <taxon>Brucella/Ochrobactrum group</taxon>
        <taxon>Brucella</taxon>
    </lineage>
</organism>